<evidence type="ECO:0000250" key="1">
    <source>
        <dbReference type="UniProtKB" id="P00395"/>
    </source>
</evidence>
<evidence type="ECO:0000250" key="2">
    <source>
        <dbReference type="UniProtKB" id="P00396"/>
    </source>
</evidence>
<evidence type="ECO:0000250" key="3">
    <source>
        <dbReference type="UniProtKB" id="P00401"/>
    </source>
</evidence>
<evidence type="ECO:0000305" key="4"/>
<keyword id="KW-0106">Calcium</keyword>
<keyword id="KW-0186">Copper</keyword>
<keyword id="KW-0249">Electron transport</keyword>
<keyword id="KW-0349">Heme</keyword>
<keyword id="KW-0408">Iron</keyword>
<keyword id="KW-0460">Magnesium</keyword>
<keyword id="KW-0472">Membrane</keyword>
<keyword id="KW-0479">Metal-binding</keyword>
<keyword id="KW-0496">Mitochondrion</keyword>
<keyword id="KW-0999">Mitochondrion inner membrane</keyword>
<keyword id="KW-0679">Respiratory chain</keyword>
<keyword id="KW-0915">Sodium</keyword>
<keyword id="KW-1278">Translocase</keyword>
<keyword id="KW-0812">Transmembrane</keyword>
<keyword id="KW-1133">Transmembrane helix</keyword>
<keyword id="KW-0813">Transport</keyword>
<proteinExistence type="inferred from homology"/>
<dbReference type="EC" id="7.1.1.9"/>
<dbReference type="EMBL" id="X97336">
    <property type="protein sequence ID" value="CAA66003.1"/>
    <property type="molecule type" value="Genomic_DNA"/>
</dbReference>
<dbReference type="PIR" id="T11249">
    <property type="entry name" value="T11249"/>
</dbReference>
<dbReference type="SMR" id="Q96062"/>
<dbReference type="CTD" id="4512"/>
<dbReference type="UniPathway" id="UPA00705"/>
<dbReference type="GO" id="GO:0005743">
    <property type="term" value="C:mitochondrial inner membrane"/>
    <property type="evidence" value="ECO:0007669"/>
    <property type="project" value="UniProtKB-SubCell"/>
</dbReference>
<dbReference type="GO" id="GO:0045277">
    <property type="term" value="C:respiratory chain complex IV"/>
    <property type="evidence" value="ECO:0000250"/>
    <property type="project" value="UniProtKB"/>
</dbReference>
<dbReference type="GO" id="GO:0004129">
    <property type="term" value="F:cytochrome-c oxidase activity"/>
    <property type="evidence" value="ECO:0007669"/>
    <property type="project" value="UniProtKB-EC"/>
</dbReference>
<dbReference type="GO" id="GO:0020037">
    <property type="term" value="F:heme binding"/>
    <property type="evidence" value="ECO:0007669"/>
    <property type="project" value="InterPro"/>
</dbReference>
<dbReference type="GO" id="GO:0046872">
    <property type="term" value="F:metal ion binding"/>
    <property type="evidence" value="ECO:0007669"/>
    <property type="project" value="UniProtKB-KW"/>
</dbReference>
<dbReference type="GO" id="GO:0015990">
    <property type="term" value="P:electron transport coupled proton transport"/>
    <property type="evidence" value="ECO:0007669"/>
    <property type="project" value="TreeGrafter"/>
</dbReference>
<dbReference type="GO" id="GO:0006123">
    <property type="term" value="P:mitochondrial electron transport, cytochrome c to oxygen"/>
    <property type="evidence" value="ECO:0007669"/>
    <property type="project" value="TreeGrafter"/>
</dbReference>
<dbReference type="CDD" id="cd01663">
    <property type="entry name" value="Cyt_c_Oxidase_I"/>
    <property type="match status" value="1"/>
</dbReference>
<dbReference type="FunFam" id="1.20.210.10:FF:000001">
    <property type="entry name" value="Cytochrome c oxidase subunit 1"/>
    <property type="match status" value="1"/>
</dbReference>
<dbReference type="Gene3D" id="1.20.210.10">
    <property type="entry name" value="Cytochrome c oxidase-like, subunit I domain"/>
    <property type="match status" value="1"/>
</dbReference>
<dbReference type="InterPro" id="IPR023616">
    <property type="entry name" value="Cyt_c_oxase-like_su1_dom"/>
</dbReference>
<dbReference type="InterPro" id="IPR036927">
    <property type="entry name" value="Cyt_c_oxase-like_su1_sf"/>
</dbReference>
<dbReference type="InterPro" id="IPR000883">
    <property type="entry name" value="Cyt_C_Oxase_1"/>
</dbReference>
<dbReference type="InterPro" id="IPR023615">
    <property type="entry name" value="Cyt_c_Oxase_su1_BS"/>
</dbReference>
<dbReference type="InterPro" id="IPR033944">
    <property type="entry name" value="Cyt_c_oxase_su1_dom"/>
</dbReference>
<dbReference type="PANTHER" id="PTHR10422">
    <property type="entry name" value="CYTOCHROME C OXIDASE SUBUNIT 1"/>
    <property type="match status" value="1"/>
</dbReference>
<dbReference type="PANTHER" id="PTHR10422:SF18">
    <property type="entry name" value="CYTOCHROME C OXIDASE SUBUNIT 1"/>
    <property type="match status" value="1"/>
</dbReference>
<dbReference type="Pfam" id="PF00115">
    <property type="entry name" value="COX1"/>
    <property type="match status" value="1"/>
</dbReference>
<dbReference type="PRINTS" id="PR01165">
    <property type="entry name" value="CYCOXIDASEI"/>
</dbReference>
<dbReference type="SUPFAM" id="SSF81442">
    <property type="entry name" value="Cytochrome c oxidase subunit I-like"/>
    <property type="match status" value="1"/>
</dbReference>
<dbReference type="PROSITE" id="PS50855">
    <property type="entry name" value="COX1"/>
    <property type="match status" value="1"/>
</dbReference>
<dbReference type="PROSITE" id="PS00077">
    <property type="entry name" value="COX1_CUB"/>
    <property type="match status" value="1"/>
</dbReference>
<organism>
    <name type="scientific">Rhinoceros unicornis</name>
    <name type="common">Greater Indian rhinoceros</name>
    <dbReference type="NCBI Taxonomy" id="9809"/>
    <lineage>
        <taxon>Eukaryota</taxon>
        <taxon>Metazoa</taxon>
        <taxon>Chordata</taxon>
        <taxon>Craniata</taxon>
        <taxon>Vertebrata</taxon>
        <taxon>Euteleostomi</taxon>
        <taxon>Mammalia</taxon>
        <taxon>Eutheria</taxon>
        <taxon>Laurasiatheria</taxon>
        <taxon>Perissodactyla</taxon>
        <taxon>Rhinocerotidae</taxon>
        <taxon>Rhinoceros</taxon>
    </lineage>
</organism>
<comment type="function">
    <text evidence="3">Component of the cytochrome c oxidase, the last enzyme in the mitochondrial electron transport chain which drives oxidative phosphorylation. The respiratory chain contains 3 multisubunit complexes succinate dehydrogenase (complex II, CII), ubiquinol-cytochrome c oxidoreductase (cytochrome b-c1 complex, complex III, CIII) and cytochrome c oxidase (complex IV, CIV), that cooperate to transfer electrons derived from NADH and succinate to molecular oxygen, creating an electrochemical gradient over the inner membrane that drives transmembrane transport and the ATP synthase. Cytochrome c oxidase is the component of the respiratory chain that catalyzes the reduction of oxygen to water. Electrons originating from reduced cytochrome c in the intermembrane space (IMS) are transferred via the dinuclear copper A center (CU(A)) of subunit 2 and heme A of subunit 1 to the active site in subunit 1, a binuclear center (BNC) formed by heme A3 and copper B (CU(B)). The BNC reduces molecular oxygen to 2 water molecules using 4 electrons from cytochrome c in the IMS and 4 protons from the mitochondrial matrix.</text>
</comment>
<comment type="catalytic activity">
    <reaction evidence="3">
        <text>4 Fe(II)-[cytochrome c] + O2 + 8 H(+)(in) = 4 Fe(III)-[cytochrome c] + 2 H2O + 4 H(+)(out)</text>
        <dbReference type="Rhea" id="RHEA:11436"/>
        <dbReference type="Rhea" id="RHEA-COMP:10350"/>
        <dbReference type="Rhea" id="RHEA-COMP:14399"/>
        <dbReference type="ChEBI" id="CHEBI:15377"/>
        <dbReference type="ChEBI" id="CHEBI:15378"/>
        <dbReference type="ChEBI" id="CHEBI:15379"/>
        <dbReference type="ChEBI" id="CHEBI:29033"/>
        <dbReference type="ChEBI" id="CHEBI:29034"/>
        <dbReference type="EC" id="7.1.1.9"/>
    </reaction>
    <physiologicalReaction direction="left-to-right" evidence="3">
        <dbReference type="Rhea" id="RHEA:11437"/>
    </physiologicalReaction>
</comment>
<comment type="cofactor">
    <cofactor evidence="2">
        <name>heme</name>
        <dbReference type="ChEBI" id="CHEBI:30413"/>
    </cofactor>
    <text evidence="2">Binds 2 heme A groups non-covalently per subunit.</text>
</comment>
<comment type="cofactor">
    <cofactor evidence="2">
        <name>Cu cation</name>
        <dbReference type="ChEBI" id="CHEBI:23378"/>
    </cofactor>
    <text evidence="2">Binds a copper B center.</text>
</comment>
<comment type="pathway">
    <text evidence="3">Energy metabolism; oxidative phosphorylation.</text>
</comment>
<comment type="subunit">
    <text evidence="1 2">Component of the cytochrome c oxidase (complex IV, CIV), a multisubunit enzyme composed of 14 subunits. The complex is composed of a catalytic core of 3 subunits MT-CO1, MT-CO2 and MT-CO3, encoded in the mitochondrial DNA, and 11 supernumerary subunits COX4I, COX5A, COX5B, COX6A, COX6B, COX6C, COX7A, COX7B, COX7C, COX8 and NDUFA4, which are encoded in the nuclear genome. The complex exists as a monomer or a dimer and forms supercomplexes (SCs) in the inner mitochondrial membrane with NADH-ubiquinone oxidoreductase (complex I, CI) and ubiquinol-cytochrome c oxidoreductase (cytochrome b-c1 complex, complex III, CIII), resulting in different assemblies (supercomplex SCI(1)III(2)IV(1) and megacomplex MCI(2)III(2)IV(2)) (By similarity). As a newly synthesized protein, rapidly incorporates into a multi-subunit assembly intermediate in the inner membrane, called MITRAC (mitochondrial translation regulation assembly intermediate of cytochrome c oxidase) complex, whose core components are COA3/MITRAC12 and COX14. Within the MITRAC complex, interacts with COA3 and with SMIM20/MITRAC7; the interaction with SMIM20 stabilizes the newly synthesized MT-CO1 and prevents its premature turnover. Interacts with TMEM177 in a COX20-dependent manner (By similarity).</text>
</comment>
<comment type="subcellular location">
    <subcellularLocation>
        <location evidence="2">Mitochondrion inner membrane</location>
        <topology evidence="2">Multi-pass membrane protein</topology>
    </subcellularLocation>
</comment>
<comment type="similarity">
    <text evidence="4">Belongs to the heme-copper respiratory oxidase family.</text>
</comment>
<sequence length="514" mass="57018">MFINRWLFSTNHKDIGTLYLLFGAWAGMVGTALSLLIRAELGQPGTLLGDDQIYNVVVTAHAFVMIFFMVMPIMIGGFGNWLVPLMIGAPDMAFPRMNNMSFWLLPPSFLLLLASSMVEAGAGTGWTVYPPLAGNLAHAGASVDLTIFSLHLAGISSILGAINFITTIINMKPPAMSQYQTPLFVWSVLITAVLLLLALPVLAAGITMLLTDRNLNTTFFDPAGGGDPILYQHLFWFFGHPEVYILILPGFGMISHIVTYYSGKKEPFGYMGMVWAMMSIGFLGFIVWAHHMFTVGMDVDTRAYFTSATMIIAIPTGVKVFSWLATLHGGNIKWSPAMLWALGFIFLFTVGGLTGIVLANSSLDIVLHDTYYVVAHFHYVLSMGAVFAIMGGFVHWFPLFSGYTLNQTWAKIHFTIMFVGVNMTFFPQHFLGLSGMPRRYSDYPDAYTTWNTISSMGSLISLTAVMLMVFMVWEAFASKREVSTVELTSFNLEWLHGCPPPYHTFEEPVYVNLK</sequence>
<name>COX1_RHIUN</name>
<feature type="chain" id="PRO_0000183409" description="Cytochrome c oxidase subunit 1">
    <location>
        <begin position="1"/>
        <end position="514"/>
    </location>
</feature>
<feature type="topological domain" description="Mitochondrial matrix" evidence="2">
    <location>
        <begin position="1"/>
        <end position="11"/>
    </location>
</feature>
<feature type="transmembrane region" description="Helical; Name=I" evidence="2">
    <location>
        <begin position="12"/>
        <end position="40"/>
    </location>
</feature>
<feature type="topological domain" description="Mitochondrial intermembrane" evidence="2">
    <location>
        <begin position="41"/>
        <end position="50"/>
    </location>
</feature>
<feature type="transmembrane region" description="Helical; Name=II" evidence="2">
    <location>
        <begin position="51"/>
        <end position="86"/>
    </location>
</feature>
<feature type="topological domain" description="Mitochondrial matrix" evidence="2">
    <location>
        <begin position="87"/>
        <end position="94"/>
    </location>
</feature>
<feature type="transmembrane region" description="Helical; Name=III" evidence="2">
    <location>
        <begin position="95"/>
        <end position="117"/>
    </location>
</feature>
<feature type="topological domain" description="Mitochondrial intermembrane" evidence="2">
    <location>
        <begin position="118"/>
        <end position="140"/>
    </location>
</feature>
<feature type="transmembrane region" description="Helical; Name=IV" evidence="2">
    <location>
        <begin position="141"/>
        <end position="170"/>
    </location>
</feature>
<feature type="topological domain" description="Mitochondrial matrix" evidence="2">
    <location>
        <begin position="171"/>
        <end position="182"/>
    </location>
</feature>
<feature type="transmembrane region" description="Helical; Name=V" evidence="2">
    <location>
        <begin position="183"/>
        <end position="212"/>
    </location>
</feature>
<feature type="topological domain" description="Mitochondrial intermembrane" evidence="2">
    <location>
        <begin position="213"/>
        <end position="227"/>
    </location>
</feature>
<feature type="transmembrane region" description="Helical; Name=VI" evidence="2">
    <location>
        <begin position="228"/>
        <end position="261"/>
    </location>
</feature>
<feature type="topological domain" description="Mitochondrial matrix" evidence="2">
    <location>
        <begin position="262"/>
        <end position="269"/>
    </location>
</feature>
<feature type="transmembrane region" description="Helical; Name=VII" evidence="2">
    <location>
        <begin position="270"/>
        <end position="286"/>
    </location>
</feature>
<feature type="topological domain" description="Mitochondrial intermembrane" evidence="2">
    <location>
        <begin position="287"/>
        <end position="298"/>
    </location>
</feature>
<feature type="transmembrane region" description="Helical; Name=VIII" evidence="2">
    <location>
        <begin position="299"/>
        <end position="327"/>
    </location>
</feature>
<feature type="topological domain" description="Mitochondrial matrix" evidence="2">
    <location>
        <begin position="328"/>
        <end position="335"/>
    </location>
</feature>
<feature type="transmembrane region" description="Helical; Name=IX" evidence="2">
    <location>
        <begin position="336"/>
        <end position="357"/>
    </location>
</feature>
<feature type="topological domain" description="Mitochondrial intermembrane" evidence="2">
    <location>
        <begin position="358"/>
        <end position="370"/>
    </location>
</feature>
<feature type="transmembrane region" description="Helical; Name=X" evidence="2">
    <location>
        <begin position="371"/>
        <end position="400"/>
    </location>
</feature>
<feature type="topological domain" description="Mitochondrial matrix" evidence="2">
    <location>
        <begin position="401"/>
        <end position="406"/>
    </location>
</feature>
<feature type="transmembrane region" description="Helical; Name=XI" evidence="2">
    <location>
        <begin position="407"/>
        <end position="433"/>
    </location>
</feature>
<feature type="topological domain" description="Mitochondrial intermembrane" evidence="2">
    <location>
        <begin position="434"/>
        <end position="446"/>
    </location>
</feature>
<feature type="transmembrane region" description="Helical; Name=XII" evidence="2">
    <location>
        <begin position="447"/>
        <end position="478"/>
    </location>
</feature>
<feature type="topological domain" description="Mitochondrial matrix" evidence="2">
    <location>
        <begin position="479"/>
        <end position="514"/>
    </location>
</feature>
<feature type="binding site" evidence="2">
    <location>
        <position position="40"/>
    </location>
    <ligand>
        <name>Na(+)</name>
        <dbReference type="ChEBI" id="CHEBI:29101"/>
    </ligand>
</feature>
<feature type="binding site" evidence="2">
    <location>
        <position position="45"/>
    </location>
    <ligand>
        <name>Na(+)</name>
        <dbReference type="ChEBI" id="CHEBI:29101"/>
    </ligand>
</feature>
<feature type="binding site" description="axial binding residue" evidence="2">
    <location>
        <position position="61"/>
    </location>
    <ligand>
        <name>Fe(II)-heme a</name>
        <dbReference type="ChEBI" id="CHEBI:61715"/>
        <note>low-spin</note>
    </ligand>
    <ligandPart>
        <name>Fe</name>
        <dbReference type="ChEBI" id="CHEBI:18248"/>
    </ligandPart>
</feature>
<feature type="binding site" evidence="2">
    <location>
        <position position="240"/>
    </location>
    <ligand>
        <name>Cu cation</name>
        <dbReference type="ChEBI" id="CHEBI:23378"/>
        <label>B</label>
    </ligand>
</feature>
<feature type="binding site" evidence="2">
    <location>
        <position position="244"/>
    </location>
    <ligand>
        <name>O2</name>
        <dbReference type="ChEBI" id="CHEBI:15379"/>
    </ligand>
</feature>
<feature type="binding site" evidence="2">
    <location>
        <position position="290"/>
    </location>
    <ligand>
        <name>Cu cation</name>
        <dbReference type="ChEBI" id="CHEBI:23378"/>
        <label>B</label>
    </ligand>
</feature>
<feature type="binding site" evidence="2">
    <location>
        <position position="291"/>
    </location>
    <ligand>
        <name>Cu cation</name>
        <dbReference type="ChEBI" id="CHEBI:23378"/>
        <label>B</label>
    </ligand>
</feature>
<feature type="binding site" evidence="2">
    <location>
        <position position="368"/>
    </location>
    <ligand>
        <name>Mg(2+)</name>
        <dbReference type="ChEBI" id="CHEBI:18420"/>
        <note>ligand shared with MT-CO2</note>
    </ligand>
</feature>
<feature type="binding site" evidence="2">
    <location>
        <position position="369"/>
    </location>
    <ligand>
        <name>Mg(2+)</name>
        <dbReference type="ChEBI" id="CHEBI:18420"/>
        <note>ligand shared with MT-CO2</note>
    </ligand>
</feature>
<feature type="binding site" description="axial binding residue" evidence="2">
    <location>
        <position position="376"/>
    </location>
    <ligand>
        <name>heme a3</name>
        <dbReference type="ChEBI" id="CHEBI:83282"/>
        <note>high-spin</note>
    </ligand>
    <ligandPart>
        <name>Fe</name>
        <dbReference type="ChEBI" id="CHEBI:18248"/>
    </ligandPart>
</feature>
<feature type="binding site" description="axial binding residue" evidence="2">
    <location>
        <position position="378"/>
    </location>
    <ligand>
        <name>Fe(II)-heme a</name>
        <dbReference type="ChEBI" id="CHEBI:61715"/>
        <note>low-spin</note>
    </ligand>
    <ligandPart>
        <name>Fe</name>
        <dbReference type="ChEBI" id="CHEBI:18248"/>
    </ligandPart>
</feature>
<feature type="binding site" evidence="2">
    <location>
        <position position="441"/>
    </location>
    <ligand>
        <name>Na(+)</name>
        <dbReference type="ChEBI" id="CHEBI:29101"/>
    </ligand>
</feature>
<feature type="cross-link" description="1'-histidyl-3'-tyrosine (His-Tyr)" evidence="2">
    <location>
        <begin position="240"/>
        <end position="244"/>
    </location>
</feature>
<gene>
    <name type="primary">MT-CO1</name>
    <name type="synonym">COI</name>
    <name type="synonym">COXI</name>
    <name type="synonym">MTCO1</name>
</gene>
<reference key="1">
    <citation type="journal article" date="1996" name="Mol. Biol. Evol.">
        <title>The complete mitochondrial DNA sequence of the greater Indian rhinoceros, Rhinoceros unicornis, and the Phylogenetic relationship among Carnivora, Perissodactyla, and Artiodactyla (+ Cetacea).</title>
        <authorList>
            <person name="Xu X."/>
            <person name="Janke A."/>
            <person name="Arnason U."/>
        </authorList>
    </citation>
    <scope>NUCLEOTIDE SEQUENCE [GENOMIC DNA]</scope>
    <source>
        <tissue>Kidney</tissue>
    </source>
</reference>
<accession>Q96062</accession>
<protein>
    <recommendedName>
        <fullName>Cytochrome c oxidase subunit 1</fullName>
        <ecNumber>7.1.1.9</ecNumber>
    </recommendedName>
    <alternativeName>
        <fullName>Cytochrome c oxidase polypeptide I</fullName>
    </alternativeName>
</protein>
<geneLocation type="mitochondrion"/>